<organism>
    <name type="scientific">Chaetomium globosum (strain ATCC 6205 / CBS 148.51 / DSM 1962 / NBRC 6347 / NRRL 1970)</name>
    <name type="common">Soil fungus</name>
    <dbReference type="NCBI Taxonomy" id="306901"/>
    <lineage>
        <taxon>Eukaryota</taxon>
        <taxon>Fungi</taxon>
        <taxon>Dikarya</taxon>
        <taxon>Ascomycota</taxon>
        <taxon>Pezizomycotina</taxon>
        <taxon>Sordariomycetes</taxon>
        <taxon>Sordariomycetidae</taxon>
        <taxon>Sordariales</taxon>
        <taxon>Chaetomiaceae</taxon>
        <taxon>Chaetomium</taxon>
    </lineage>
</organism>
<reference key="1">
    <citation type="journal article" date="2015" name="Genome Announc.">
        <title>Draft genome sequence of the cellulolytic fungus Chaetomium globosum.</title>
        <authorList>
            <person name="Cuomo C.A."/>
            <person name="Untereiner W.A."/>
            <person name="Ma L.-J."/>
            <person name="Grabherr M."/>
            <person name="Birren B.W."/>
        </authorList>
    </citation>
    <scope>NUCLEOTIDE SEQUENCE [LARGE SCALE GENOMIC DNA]</scope>
    <source>
        <strain>ATCC 6205 / CBS 148.51 / DSM 1962 / NBRC 6347 / NRRL 1970</strain>
    </source>
</reference>
<dbReference type="EC" id="3.1.26.-"/>
<dbReference type="EC" id="3.6.4.-"/>
<dbReference type="EMBL" id="CH408032">
    <property type="protein sequence ID" value="EAQ88115.1"/>
    <property type="status" value="ALT_SEQ"/>
    <property type="molecule type" value="Genomic_DNA"/>
</dbReference>
<dbReference type="RefSeq" id="XP_001223948.1">
    <property type="nucleotide sequence ID" value="XM_001223947.1"/>
</dbReference>
<dbReference type="SMR" id="Q2H0G2"/>
<dbReference type="STRING" id="306901.Q2H0G2"/>
<dbReference type="GeneID" id="4392482"/>
<dbReference type="VEuPathDB" id="FungiDB:CHGG_04734"/>
<dbReference type="eggNOG" id="KOG0701">
    <property type="taxonomic scope" value="Eukaryota"/>
</dbReference>
<dbReference type="HOGENOM" id="CLU_000907_4_3_1"/>
<dbReference type="InParanoid" id="Q2H0G2"/>
<dbReference type="OrthoDB" id="416741at2759"/>
<dbReference type="Proteomes" id="UP000001056">
    <property type="component" value="Unassembled WGS sequence"/>
</dbReference>
<dbReference type="GO" id="GO:0005737">
    <property type="term" value="C:cytoplasm"/>
    <property type="evidence" value="ECO:0007669"/>
    <property type="project" value="TreeGrafter"/>
</dbReference>
<dbReference type="GO" id="GO:0005634">
    <property type="term" value="C:nucleus"/>
    <property type="evidence" value="ECO:0007669"/>
    <property type="project" value="TreeGrafter"/>
</dbReference>
<dbReference type="GO" id="GO:0005524">
    <property type="term" value="F:ATP binding"/>
    <property type="evidence" value="ECO:0007669"/>
    <property type="project" value="UniProtKB-KW"/>
</dbReference>
<dbReference type="GO" id="GO:0003677">
    <property type="term" value="F:DNA binding"/>
    <property type="evidence" value="ECO:0007669"/>
    <property type="project" value="InterPro"/>
</dbReference>
<dbReference type="GO" id="GO:0004386">
    <property type="term" value="F:helicase activity"/>
    <property type="evidence" value="ECO:0007669"/>
    <property type="project" value="UniProtKB-KW"/>
</dbReference>
<dbReference type="GO" id="GO:0046872">
    <property type="term" value="F:metal ion binding"/>
    <property type="evidence" value="ECO:0007669"/>
    <property type="project" value="UniProtKB-KW"/>
</dbReference>
<dbReference type="GO" id="GO:0004525">
    <property type="term" value="F:ribonuclease III activity"/>
    <property type="evidence" value="ECO:0007669"/>
    <property type="project" value="InterPro"/>
</dbReference>
<dbReference type="GO" id="GO:0003723">
    <property type="term" value="F:RNA binding"/>
    <property type="evidence" value="ECO:0007669"/>
    <property type="project" value="UniProtKB-KW"/>
</dbReference>
<dbReference type="GO" id="GO:0051607">
    <property type="term" value="P:defense response to virus"/>
    <property type="evidence" value="ECO:0007669"/>
    <property type="project" value="UniProtKB-KW"/>
</dbReference>
<dbReference type="GO" id="GO:0050688">
    <property type="term" value="P:regulation of defense response to virus"/>
    <property type="evidence" value="ECO:0007669"/>
    <property type="project" value="UniProtKB-KW"/>
</dbReference>
<dbReference type="GO" id="GO:0030422">
    <property type="term" value="P:siRNA processing"/>
    <property type="evidence" value="ECO:0007669"/>
    <property type="project" value="TreeGrafter"/>
</dbReference>
<dbReference type="CDD" id="cd18034">
    <property type="entry name" value="DEXHc_dicer"/>
    <property type="match status" value="1"/>
</dbReference>
<dbReference type="CDD" id="cd00593">
    <property type="entry name" value="RIBOc"/>
    <property type="match status" value="2"/>
</dbReference>
<dbReference type="FunFam" id="1.10.1520.10:FF:000015">
    <property type="entry name" value="Dicer-like protein 1"/>
    <property type="match status" value="1"/>
</dbReference>
<dbReference type="Gene3D" id="3.30.160.380">
    <property type="entry name" value="Dicer dimerisation domain"/>
    <property type="match status" value="1"/>
</dbReference>
<dbReference type="Gene3D" id="3.40.50.300">
    <property type="entry name" value="P-loop containing nucleotide triphosphate hydrolases"/>
    <property type="match status" value="2"/>
</dbReference>
<dbReference type="Gene3D" id="1.10.1520.10">
    <property type="entry name" value="Ribonuclease III domain"/>
    <property type="match status" value="2"/>
</dbReference>
<dbReference type="InterPro" id="IPR038248">
    <property type="entry name" value="Dicer_dimer_sf"/>
</dbReference>
<dbReference type="InterPro" id="IPR005034">
    <property type="entry name" value="Dicer_dimerisation_dom"/>
</dbReference>
<dbReference type="InterPro" id="IPR014720">
    <property type="entry name" value="dsRBD_dom"/>
</dbReference>
<dbReference type="InterPro" id="IPR056755">
    <property type="entry name" value="DSRM_2"/>
</dbReference>
<dbReference type="InterPro" id="IPR006935">
    <property type="entry name" value="Helicase/UvrB_N"/>
</dbReference>
<dbReference type="InterPro" id="IPR014001">
    <property type="entry name" value="Helicase_ATP-bd"/>
</dbReference>
<dbReference type="InterPro" id="IPR001650">
    <property type="entry name" value="Helicase_C-like"/>
</dbReference>
<dbReference type="InterPro" id="IPR027417">
    <property type="entry name" value="P-loop_NTPase"/>
</dbReference>
<dbReference type="InterPro" id="IPR003100">
    <property type="entry name" value="PAZ_dom"/>
</dbReference>
<dbReference type="InterPro" id="IPR000999">
    <property type="entry name" value="RNase_III_dom"/>
</dbReference>
<dbReference type="InterPro" id="IPR036389">
    <property type="entry name" value="RNase_III_sf"/>
</dbReference>
<dbReference type="PANTHER" id="PTHR14950:SF62">
    <property type="entry name" value="DICER-LIKE PROTEIN 1"/>
    <property type="match status" value="1"/>
</dbReference>
<dbReference type="PANTHER" id="PTHR14950">
    <property type="entry name" value="DICER-RELATED"/>
    <property type="match status" value="1"/>
</dbReference>
<dbReference type="Pfam" id="PF03368">
    <property type="entry name" value="Dicer_dimer"/>
    <property type="match status" value="1"/>
</dbReference>
<dbReference type="Pfam" id="PF24995">
    <property type="entry name" value="DSRM_2"/>
    <property type="match status" value="1"/>
</dbReference>
<dbReference type="Pfam" id="PF00271">
    <property type="entry name" value="Helicase_C"/>
    <property type="match status" value="1"/>
</dbReference>
<dbReference type="Pfam" id="PF04851">
    <property type="entry name" value="ResIII"/>
    <property type="match status" value="1"/>
</dbReference>
<dbReference type="Pfam" id="PF00636">
    <property type="entry name" value="Ribonuclease_3"/>
    <property type="match status" value="2"/>
</dbReference>
<dbReference type="SMART" id="SM00487">
    <property type="entry name" value="DEXDc"/>
    <property type="match status" value="1"/>
</dbReference>
<dbReference type="SMART" id="SM00490">
    <property type="entry name" value="HELICc"/>
    <property type="match status" value="1"/>
</dbReference>
<dbReference type="SMART" id="SM00535">
    <property type="entry name" value="RIBOc"/>
    <property type="match status" value="2"/>
</dbReference>
<dbReference type="SUPFAM" id="SSF52540">
    <property type="entry name" value="P-loop containing nucleoside triphosphate hydrolases"/>
    <property type="match status" value="2"/>
</dbReference>
<dbReference type="SUPFAM" id="SSF69065">
    <property type="entry name" value="RNase III domain-like"/>
    <property type="match status" value="2"/>
</dbReference>
<dbReference type="PROSITE" id="PS51327">
    <property type="entry name" value="DICER_DSRBF"/>
    <property type="match status" value="1"/>
</dbReference>
<dbReference type="PROSITE" id="PS50137">
    <property type="entry name" value="DS_RBD"/>
    <property type="match status" value="1"/>
</dbReference>
<dbReference type="PROSITE" id="PS51192">
    <property type="entry name" value="HELICASE_ATP_BIND_1"/>
    <property type="match status" value="1"/>
</dbReference>
<dbReference type="PROSITE" id="PS51194">
    <property type="entry name" value="HELICASE_CTER"/>
    <property type="match status" value="1"/>
</dbReference>
<dbReference type="PROSITE" id="PS50821">
    <property type="entry name" value="PAZ"/>
    <property type="match status" value="1"/>
</dbReference>
<dbReference type="PROSITE" id="PS00517">
    <property type="entry name" value="RNASE_3_1"/>
    <property type="match status" value="1"/>
</dbReference>
<dbReference type="PROSITE" id="PS50142">
    <property type="entry name" value="RNASE_3_2"/>
    <property type="match status" value="2"/>
</dbReference>
<gene>
    <name type="primary">DCL1</name>
    <name type="ORF">CHGG_04734</name>
</gene>
<comment type="function">
    <text evidence="1">Dicer-like endonuclease involved in cleaving double-stranded RNA in the RNA interference (RNAi) pathway. Produces 21 to 25 bp dsRNAs (siRNAs) which target the selective destruction of homologous RNAs leading to sequence-specific suppression of gene expression, called post-transcriptional gene silencing (PTGS). Part of a broad host defense response against viral infection and transposons (By similarity).</text>
</comment>
<comment type="cofactor">
    <cofactor evidence="1">
        <name>Mg(2+)</name>
        <dbReference type="ChEBI" id="CHEBI:18420"/>
    </cofactor>
    <cofactor evidence="1">
        <name>Mn(2+)</name>
        <dbReference type="ChEBI" id="CHEBI:29035"/>
    </cofactor>
</comment>
<comment type="similarity">
    <text evidence="8">Belongs to the helicase family. Dicer subfamily.</text>
</comment>
<comment type="sequence caution" evidence="10">
    <conflict type="erroneous gene model prediction">
        <sequence resource="EMBL-CDS" id="EAQ88115"/>
    </conflict>
</comment>
<comment type="sequence caution" evidence="10">
    <conflict type="frameshift">
        <sequence resource="EMBL-CDS" id="EAQ88115"/>
    </conflict>
</comment>
<evidence type="ECO:0000250" key="1"/>
<evidence type="ECO:0000250" key="2">
    <source>
        <dbReference type="UniProtKB" id="Q09884"/>
    </source>
</evidence>
<evidence type="ECO:0000255" key="3">
    <source>
        <dbReference type="PROSITE-ProRule" id="PRU00142"/>
    </source>
</evidence>
<evidence type="ECO:0000255" key="4">
    <source>
        <dbReference type="PROSITE-ProRule" id="PRU00177"/>
    </source>
</evidence>
<evidence type="ECO:0000255" key="5">
    <source>
        <dbReference type="PROSITE-ProRule" id="PRU00266"/>
    </source>
</evidence>
<evidence type="ECO:0000255" key="6">
    <source>
        <dbReference type="PROSITE-ProRule" id="PRU00541"/>
    </source>
</evidence>
<evidence type="ECO:0000255" key="7">
    <source>
        <dbReference type="PROSITE-ProRule" id="PRU00542"/>
    </source>
</evidence>
<evidence type="ECO:0000255" key="8">
    <source>
        <dbReference type="PROSITE-ProRule" id="PRU00657"/>
    </source>
</evidence>
<evidence type="ECO:0000256" key="9">
    <source>
        <dbReference type="SAM" id="MobiDB-lite"/>
    </source>
</evidence>
<evidence type="ECO:0000305" key="10"/>
<keyword id="KW-0051">Antiviral defense</keyword>
<keyword id="KW-0930">Antiviral protein</keyword>
<keyword id="KW-0067">ATP-binding</keyword>
<keyword id="KW-0347">Helicase</keyword>
<keyword id="KW-0378">Hydrolase</keyword>
<keyword id="KW-0460">Magnesium</keyword>
<keyword id="KW-0464">Manganese</keyword>
<keyword id="KW-0479">Metal-binding</keyword>
<keyword id="KW-0547">Nucleotide-binding</keyword>
<keyword id="KW-1185">Reference proteome</keyword>
<keyword id="KW-0677">Repeat</keyword>
<keyword id="KW-0694">RNA-binding</keyword>
<keyword id="KW-0862">Zinc</keyword>
<protein>
    <recommendedName>
        <fullName>Dicer-like protein 1</fullName>
    </recommendedName>
    <domain>
        <recommendedName>
            <fullName>Endoribonuclease DCL1</fullName>
            <ecNumber>3.1.26.-</ecNumber>
        </recommendedName>
    </domain>
    <domain>
        <recommendedName>
            <fullName>ATP-dependent helicase DCL1</fullName>
            <ecNumber>3.6.4.-</ecNumber>
        </recommendedName>
    </domain>
</protein>
<sequence length="1607" mass="181289">MNAEMREGSSALPQLQAHSPVADNIDLMDIDEPASNGSFEESPATPFDDDAFVNAGDTDQEDDDPDTKKWIVNDSRKPRKISEKKRADHAAFDVWIEENQQDLSKGLDKFIVDDDGKTFQSLIRDFENKRIITSPRDYQLELFERAKTQNTIAVLDTGSGKTLIAALLLRWTIQNELEDRSKRLPKRIAFFLVDKVALVFQQHAVLACNLDYPLEKFCGDMVEDVTQDFWHKTFDENMAIVCTAEILYQCLTHSYIRMDQVNLLVFDEAHHTKKNHPYARIIKDFYAEVKDLNKRLRISRAMTASPVDAQIDPKIARSPELEGLLHSQIATVADPTALHNSSTKLKREVTVEYGKCLPEFETGLNRALKDLVGEHRLFQKPFAFTATAASELGPWCADRYWQLFFRGEEVVKLEAKTEREILRKSAYSQEIAAQVNKVREAHRLVGQHEFASPSSDLLSSKVVILLRILRGEFRGVDHKRRCIVFVRQRNVASLLTDLLQQPEMRIPGLEPGILVGGGRPEASYDNAKVTYRDQVLTIIKFKKGELNCIFATSVAEEGLDIPDCNVIIRYDLNNTLIQYIQSRGRARQEGSIYIHMVESENEEHVKKVCQNQESEDALRKFCEALPADRKLTGNNFDMEYFLRKEKDQRQYTVPETGARLNYKQSLICLAAFVASLPHPPEVNLTAGYLVLSVPGGYQCEVTLPESSPIRSATGKVYASKAVAKCSAAYEMCLMLIKGKYLDQHLRPTFTKQLPAMRNARLAVSSKKKEQYKMRIKPELWSVLGEPTELFAMALTLADPTALARHSSPLLLLTRQPIPQIASFPLYFGKNRSSAVHCVPVPGRVELDDNQIQGLVAVTLAIFKDIFSKEYEATAAQLPYFLAPTLMQHGSDFTSVTDLSRIVDWGAVTFVRDNERVAYALDDEADEFFKNKYVADPYDGSRKFFLRGRRHDMKPTDMVPEGIVTPGHRAWRVSCKTHDILNYSLSAWSKSRAFLTPREDQPVVEAEVLPIRRNLLDDHIGDDDLEPKPCFIVLEPLRISPLPVDLVAMAYNFPAIMHRIDSNLVALEACKMLNLNVRPDLALEAFTKDSDNSGEHDAEQISFQSGMGNNYERLEFLGDCFLKMATTISIFTLIPDKAEFEYHVERMLLICNRNLFNNALEVKLEEHIRSMAFDRRSWYPEGLTLKKGKRKDLTRQHVLADKTIADVCEALIGAAYLTAQEQTPPNFDLAIRAVTVMVKDKNHTMTSYSDYYAAYSPPAWQTAPCNSTQLDMAARFEARMGYAFTHPRLLRSAFQHPTYPSVYEKLPSYQRLEFLGDALLDMASVEFLFHRFPGADPQWLTEHKMAMVSNQFLGCLAVYLGFHRAISYCASAIQKEITEYVTEIEDALQSARDDASKTPCNRHATTPSPGDLPAESFARDFWVRCSRPPKCLPDVVEAYVGAVFVDSRYDFARVRAFFADHVRPFFEDMRLYDAFANKHPVTFLAGIMQGRMRCAEWRLLVKDLPPVVGAGAGTELETPQVVCAVRVHGLTLAHAVAASGRYGKIAAAKKAIQVLEGMDAEAFRKAYGCACVLGEEEQQAAQTIATELEVFPAFSASGLEVAHHGSAV</sequence>
<accession>Q2H0G2</accession>
<proteinExistence type="inferred from homology"/>
<feature type="chain" id="PRO_0000306778" description="Dicer-like protein 1">
    <location>
        <begin position="1"/>
        <end position="1607"/>
    </location>
</feature>
<feature type="domain" description="Helicase ATP-binding" evidence="6">
    <location>
        <begin position="142"/>
        <end position="324"/>
    </location>
</feature>
<feature type="domain" description="Helicase C-terminal" evidence="7">
    <location>
        <begin position="461"/>
        <end position="632"/>
    </location>
</feature>
<feature type="domain" description="Dicer dsRNA-binding fold" evidence="8">
    <location>
        <begin position="665"/>
        <end position="755"/>
    </location>
</feature>
<feature type="domain" description="PAZ" evidence="3">
    <location>
        <begin position="905"/>
        <end position="1040"/>
    </location>
</feature>
<feature type="domain" description="RNase III 1" evidence="4">
    <location>
        <begin position="1063"/>
        <end position="1219"/>
    </location>
</feature>
<feature type="domain" description="RNase III 2" evidence="4">
    <location>
        <begin position="1272"/>
        <end position="1447"/>
    </location>
</feature>
<feature type="domain" description="DRBM" evidence="5">
    <location>
        <begin position="1478"/>
        <end position="1556"/>
    </location>
</feature>
<feature type="region of interest" description="Disordered" evidence="9">
    <location>
        <begin position="1"/>
        <end position="74"/>
    </location>
</feature>
<feature type="short sequence motif" description="DEAH box">
    <location>
        <begin position="267"/>
        <end position="270"/>
    </location>
</feature>
<feature type="binding site" evidence="6">
    <location>
        <begin position="155"/>
        <end position="162"/>
    </location>
    <ligand>
        <name>ATP</name>
        <dbReference type="ChEBI" id="CHEBI:30616"/>
    </ligand>
</feature>
<feature type="binding site" evidence="1">
    <location>
        <position position="1312"/>
    </location>
    <ligand>
        <name>Mg(2+)</name>
        <dbReference type="ChEBI" id="CHEBI:18420"/>
    </ligand>
</feature>
<feature type="binding site" evidence="1">
    <location>
        <position position="1433"/>
    </location>
    <ligand>
        <name>Mg(2+)</name>
        <dbReference type="ChEBI" id="CHEBI:18420"/>
    </ligand>
</feature>
<feature type="binding site" evidence="1">
    <location>
        <position position="1436"/>
    </location>
    <ligand>
        <name>Mg(2+)</name>
        <dbReference type="ChEBI" id="CHEBI:18420"/>
    </ligand>
</feature>
<feature type="binding site" evidence="2">
    <location>
        <position position="1493"/>
    </location>
    <ligand>
        <name>Zn(2+)</name>
        <dbReference type="ChEBI" id="CHEBI:29105"/>
    </ligand>
</feature>
<feature type="binding site" evidence="2">
    <location>
        <position position="1527"/>
    </location>
    <ligand>
        <name>Zn(2+)</name>
        <dbReference type="ChEBI" id="CHEBI:29105"/>
    </ligand>
</feature>
<feature type="binding site" evidence="2">
    <location>
        <position position="1568"/>
    </location>
    <ligand>
        <name>Zn(2+)</name>
        <dbReference type="ChEBI" id="CHEBI:29105"/>
    </ligand>
</feature>
<feature type="binding site" evidence="2">
    <location>
        <position position="1570"/>
    </location>
    <ligand>
        <name>Zn(2+)</name>
        <dbReference type="ChEBI" id="CHEBI:29105"/>
    </ligand>
</feature>
<feature type="site" description="Important for activity" evidence="1">
    <location>
        <position position="1429"/>
    </location>
</feature>
<name>DCL1_CHAGB</name>